<reference key="1">
    <citation type="journal article" date="1997" name="J. Bacteriol.">
        <title>Complete genome sequence of Methanobacterium thermoautotrophicum deltaH: functional analysis and comparative genomics.</title>
        <authorList>
            <person name="Smith D.R."/>
            <person name="Doucette-Stamm L.A."/>
            <person name="Deloughery C."/>
            <person name="Lee H.-M."/>
            <person name="Dubois J."/>
            <person name="Aldredge T."/>
            <person name="Bashirzadeh R."/>
            <person name="Blakely D."/>
            <person name="Cook R."/>
            <person name="Gilbert K."/>
            <person name="Harrison D."/>
            <person name="Hoang L."/>
            <person name="Keagle P."/>
            <person name="Lumm W."/>
            <person name="Pothier B."/>
            <person name="Qiu D."/>
            <person name="Spadafora R."/>
            <person name="Vicare R."/>
            <person name="Wang Y."/>
            <person name="Wierzbowski J."/>
            <person name="Gibson R."/>
            <person name="Jiwani N."/>
            <person name="Caruso A."/>
            <person name="Bush D."/>
            <person name="Safer H."/>
            <person name="Patwell D."/>
            <person name="Prabhakar S."/>
            <person name="McDougall S."/>
            <person name="Shimer G."/>
            <person name="Goyal A."/>
            <person name="Pietrovski S."/>
            <person name="Church G.M."/>
            <person name="Daniels C.J."/>
            <person name="Mao J.-I."/>
            <person name="Rice P."/>
            <person name="Noelling J."/>
            <person name="Reeve J.N."/>
        </authorList>
    </citation>
    <scope>NUCLEOTIDE SEQUENCE [LARGE SCALE GENOMIC DNA]</scope>
    <source>
        <strain>ATCC 29096 / DSM 1053 / JCM 10044 / NBRC 100330 / Delta H</strain>
    </source>
</reference>
<organism>
    <name type="scientific">Methanothermobacter thermautotrophicus (strain ATCC 29096 / DSM 1053 / JCM 10044 / NBRC 100330 / Delta H)</name>
    <name type="common">Methanobacterium thermoautotrophicum</name>
    <dbReference type="NCBI Taxonomy" id="187420"/>
    <lineage>
        <taxon>Archaea</taxon>
        <taxon>Methanobacteriati</taxon>
        <taxon>Methanobacteriota</taxon>
        <taxon>Methanomada group</taxon>
        <taxon>Methanobacteria</taxon>
        <taxon>Methanobacteriales</taxon>
        <taxon>Methanobacteriaceae</taxon>
        <taxon>Methanothermobacter</taxon>
    </lineage>
</organism>
<proteinExistence type="inferred from homology"/>
<comment type="function">
    <text evidence="1">Involved in pre-rRNA and tRNA processing. Utilizes the methyl donor S-adenosyl-L-methionine to catalyze the site-specific 2'-hydroxyl methylation of ribose moieties in rRNA and tRNA. Site specificity is provided by a guide RNA that base pairs with the substrate. Methylation occurs at a characteristic distance from the sequence involved in base pairing with the guide RNA.</text>
</comment>
<comment type="subunit">
    <text evidence="1">Interacts with nop5. Component of box C/D small ribonucleoprotein (sRNP) particles that contain rpl7ae, FlpA and nop5, plus a guide RNA.</text>
</comment>
<comment type="similarity">
    <text evidence="1">Belongs to the methyltransferase superfamily. Fibrillarin family.</text>
</comment>
<name>FLPA_METTH</name>
<gene>
    <name evidence="1" type="primary">flpA</name>
    <name type="ordered locus">MTH_1215</name>
</gene>
<dbReference type="EC" id="2.1.1.-" evidence="1"/>
<dbReference type="EMBL" id="AE000666">
    <property type="protein sequence ID" value="AAB85704.1"/>
    <property type="molecule type" value="Genomic_DNA"/>
</dbReference>
<dbReference type="PIR" id="C69029">
    <property type="entry name" value="C69029"/>
</dbReference>
<dbReference type="RefSeq" id="WP_010876839.1">
    <property type="nucleotide sequence ID" value="NC_000916.1"/>
</dbReference>
<dbReference type="SMR" id="O27283"/>
<dbReference type="FunCoup" id="O27283">
    <property type="interactions" value="124"/>
</dbReference>
<dbReference type="STRING" id="187420.MTH_1215"/>
<dbReference type="PaxDb" id="187420-MTH_1215"/>
<dbReference type="EnsemblBacteria" id="AAB85704">
    <property type="protein sequence ID" value="AAB85704"/>
    <property type="gene ID" value="MTH_1215"/>
</dbReference>
<dbReference type="GeneID" id="1471623"/>
<dbReference type="KEGG" id="mth:MTH_1215"/>
<dbReference type="PATRIC" id="fig|187420.15.peg.1193"/>
<dbReference type="HOGENOM" id="CLU_059055_2_0_2"/>
<dbReference type="InParanoid" id="O27283"/>
<dbReference type="Proteomes" id="UP000005223">
    <property type="component" value="Chromosome"/>
</dbReference>
<dbReference type="GO" id="GO:1990259">
    <property type="term" value="F:histone H2AQ104 methyltransferase activity"/>
    <property type="evidence" value="ECO:0007669"/>
    <property type="project" value="TreeGrafter"/>
</dbReference>
<dbReference type="GO" id="GO:0003723">
    <property type="term" value="F:RNA binding"/>
    <property type="evidence" value="ECO:0007669"/>
    <property type="project" value="UniProtKB-UniRule"/>
</dbReference>
<dbReference type="GO" id="GO:0008649">
    <property type="term" value="F:rRNA methyltransferase activity"/>
    <property type="evidence" value="ECO:0007669"/>
    <property type="project" value="TreeGrafter"/>
</dbReference>
<dbReference type="GO" id="GO:0000494">
    <property type="term" value="P:box C/D sno(s)RNA 3'-end processing"/>
    <property type="evidence" value="ECO:0007669"/>
    <property type="project" value="TreeGrafter"/>
</dbReference>
<dbReference type="GO" id="GO:0008033">
    <property type="term" value="P:tRNA processing"/>
    <property type="evidence" value="ECO:0007669"/>
    <property type="project" value="UniProtKB-UniRule"/>
</dbReference>
<dbReference type="CDD" id="cd02440">
    <property type="entry name" value="AdoMet_MTases"/>
    <property type="match status" value="1"/>
</dbReference>
<dbReference type="Gene3D" id="3.30.200.20">
    <property type="entry name" value="Phosphorylase Kinase, domain 1"/>
    <property type="match status" value="1"/>
</dbReference>
<dbReference type="Gene3D" id="3.40.50.150">
    <property type="entry name" value="Vaccinia Virus protein VP39"/>
    <property type="match status" value="1"/>
</dbReference>
<dbReference type="HAMAP" id="MF_00351">
    <property type="entry name" value="RNA_methyltransf_FlpA"/>
    <property type="match status" value="1"/>
</dbReference>
<dbReference type="InterPro" id="IPR000692">
    <property type="entry name" value="Fibrillarin"/>
</dbReference>
<dbReference type="InterPro" id="IPR020813">
    <property type="entry name" value="Fibrillarin_CS"/>
</dbReference>
<dbReference type="InterPro" id="IPR029063">
    <property type="entry name" value="SAM-dependent_MTases_sf"/>
</dbReference>
<dbReference type="NCBIfam" id="NF003276">
    <property type="entry name" value="PRK04266.1-2"/>
    <property type="match status" value="1"/>
</dbReference>
<dbReference type="PANTHER" id="PTHR10335:SF17">
    <property type="entry name" value="FIBRILLARIN"/>
    <property type="match status" value="1"/>
</dbReference>
<dbReference type="PANTHER" id="PTHR10335">
    <property type="entry name" value="RRNA 2-O-METHYLTRANSFERASE FIBRILLARIN"/>
    <property type="match status" value="1"/>
</dbReference>
<dbReference type="Pfam" id="PF01269">
    <property type="entry name" value="Fibrillarin"/>
    <property type="match status" value="1"/>
</dbReference>
<dbReference type="PIRSF" id="PIRSF006540">
    <property type="entry name" value="Nop17p"/>
    <property type="match status" value="1"/>
</dbReference>
<dbReference type="PRINTS" id="PR00052">
    <property type="entry name" value="FIBRILLARIN"/>
</dbReference>
<dbReference type="SMART" id="SM01206">
    <property type="entry name" value="Fibrillarin"/>
    <property type="match status" value="1"/>
</dbReference>
<dbReference type="SUPFAM" id="SSF53335">
    <property type="entry name" value="S-adenosyl-L-methionine-dependent methyltransferases"/>
    <property type="match status" value="1"/>
</dbReference>
<dbReference type="PROSITE" id="PS00566">
    <property type="entry name" value="FIBRILLARIN"/>
    <property type="match status" value="1"/>
</dbReference>
<keyword id="KW-0489">Methyltransferase</keyword>
<keyword id="KW-1185">Reference proteome</keyword>
<keyword id="KW-0694">RNA-binding</keyword>
<keyword id="KW-0698">rRNA processing</keyword>
<keyword id="KW-0808">Transferase</keyword>
<keyword id="KW-0819">tRNA processing</keyword>
<feature type="chain" id="PRO_0000148537" description="Fibrillarin-like rRNA/tRNA 2'-O-methyltransferase">
    <location>
        <begin position="1"/>
        <end position="224"/>
    </location>
</feature>
<feature type="binding site" evidence="1">
    <location>
        <begin position="82"/>
        <end position="83"/>
    </location>
    <ligand>
        <name>S-adenosyl-L-methionine</name>
        <dbReference type="ChEBI" id="CHEBI:59789"/>
    </ligand>
</feature>
<feature type="binding site" evidence="1">
    <location>
        <begin position="100"/>
        <end position="101"/>
    </location>
    <ligand>
        <name>S-adenosyl-L-methionine</name>
        <dbReference type="ChEBI" id="CHEBI:59789"/>
    </ligand>
</feature>
<feature type="binding site" evidence="1">
    <location>
        <begin position="125"/>
        <end position="126"/>
    </location>
    <ligand>
        <name>S-adenosyl-L-methionine</name>
        <dbReference type="ChEBI" id="CHEBI:59789"/>
    </ligand>
</feature>
<feature type="binding site" evidence="1">
    <location>
        <begin position="145"/>
        <end position="148"/>
    </location>
    <ligand>
        <name>S-adenosyl-L-methionine</name>
        <dbReference type="ChEBI" id="CHEBI:59789"/>
    </ligand>
</feature>
<protein>
    <recommendedName>
        <fullName evidence="1">Fibrillarin-like rRNA/tRNA 2'-O-methyltransferase</fullName>
        <ecNumber evidence="1">2.1.1.-</ecNumber>
    </recommendedName>
</protein>
<sequence length="224" mass="25305">MYAVKEVKGMDGVFIMNNSLLTINPNPGVKVYGERIIDWGGREYRVWDPRRSKLAAAILNGLRGFSLNSDSRVLYLGASAGTTASHISDIVTDGRVYCIEFSPRMMRELLGVCESRKNMAPLLEDASRPLSYLRMVEAADLVYCDVAQPDQTRLFIENMDCFLKRDGYGLIMIKARSIDVTRSPRKIFREEVGKLESSGFRIIDQVGLNPYEKDHMAVLVKRDV</sequence>
<evidence type="ECO:0000255" key="1">
    <source>
        <dbReference type="HAMAP-Rule" id="MF_00351"/>
    </source>
</evidence>
<accession>O27283</accession>